<name>PUR9_PROMH</name>
<dbReference type="EC" id="2.1.2.3" evidence="1"/>
<dbReference type="EC" id="3.5.4.10" evidence="1"/>
<dbReference type="EMBL" id="AM942759">
    <property type="protein sequence ID" value="CAR45463.1"/>
    <property type="molecule type" value="Genomic_DNA"/>
</dbReference>
<dbReference type="RefSeq" id="WP_012368501.1">
    <property type="nucleotide sequence ID" value="NC_010554.1"/>
</dbReference>
<dbReference type="SMR" id="B4EYT2"/>
<dbReference type="EnsemblBacteria" id="CAR45463">
    <property type="protein sequence ID" value="CAR45463"/>
    <property type="gene ID" value="PMI2768"/>
</dbReference>
<dbReference type="GeneID" id="6802029"/>
<dbReference type="KEGG" id="pmr:PMI2768"/>
<dbReference type="eggNOG" id="COG0138">
    <property type="taxonomic scope" value="Bacteria"/>
</dbReference>
<dbReference type="HOGENOM" id="CLU_016316_5_2_6"/>
<dbReference type="UniPathway" id="UPA00074">
    <property type="reaction ID" value="UER00133"/>
</dbReference>
<dbReference type="UniPathway" id="UPA00074">
    <property type="reaction ID" value="UER00135"/>
</dbReference>
<dbReference type="Proteomes" id="UP000008319">
    <property type="component" value="Chromosome"/>
</dbReference>
<dbReference type="GO" id="GO:0005829">
    <property type="term" value="C:cytosol"/>
    <property type="evidence" value="ECO:0007669"/>
    <property type="project" value="TreeGrafter"/>
</dbReference>
<dbReference type="GO" id="GO:0003937">
    <property type="term" value="F:IMP cyclohydrolase activity"/>
    <property type="evidence" value="ECO:0007669"/>
    <property type="project" value="UniProtKB-UniRule"/>
</dbReference>
<dbReference type="GO" id="GO:0004643">
    <property type="term" value="F:phosphoribosylaminoimidazolecarboxamide formyltransferase activity"/>
    <property type="evidence" value="ECO:0007669"/>
    <property type="project" value="UniProtKB-UniRule"/>
</dbReference>
<dbReference type="GO" id="GO:0006189">
    <property type="term" value="P:'de novo' IMP biosynthetic process"/>
    <property type="evidence" value="ECO:0007669"/>
    <property type="project" value="UniProtKB-UniRule"/>
</dbReference>
<dbReference type="CDD" id="cd01421">
    <property type="entry name" value="IMPCH"/>
    <property type="match status" value="1"/>
</dbReference>
<dbReference type="FunFam" id="3.40.140.20:FF:000001">
    <property type="entry name" value="Bifunctional purine biosynthesis protein PurH"/>
    <property type="match status" value="1"/>
</dbReference>
<dbReference type="FunFam" id="3.40.140.20:FF:000002">
    <property type="entry name" value="Bifunctional purine biosynthesis protein PurH"/>
    <property type="match status" value="1"/>
</dbReference>
<dbReference type="FunFam" id="3.40.50.1380:FF:000001">
    <property type="entry name" value="Bifunctional purine biosynthesis protein PurH"/>
    <property type="match status" value="1"/>
</dbReference>
<dbReference type="Gene3D" id="3.40.140.20">
    <property type="match status" value="2"/>
</dbReference>
<dbReference type="Gene3D" id="3.40.50.1380">
    <property type="entry name" value="Methylglyoxal synthase-like domain"/>
    <property type="match status" value="1"/>
</dbReference>
<dbReference type="HAMAP" id="MF_00139">
    <property type="entry name" value="PurH"/>
    <property type="match status" value="1"/>
</dbReference>
<dbReference type="InterPro" id="IPR024051">
    <property type="entry name" value="AICAR_Tfase_dup_dom_sf"/>
</dbReference>
<dbReference type="InterPro" id="IPR016193">
    <property type="entry name" value="Cytidine_deaminase-like"/>
</dbReference>
<dbReference type="InterPro" id="IPR011607">
    <property type="entry name" value="MGS-like_dom"/>
</dbReference>
<dbReference type="InterPro" id="IPR036914">
    <property type="entry name" value="MGS-like_dom_sf"/>
</dbReference>
<dbReference type="InterPro" id="IPR002695">
    <property type="entry name" value="PurH-like"/>
</dbReference>
<dbReference type="NCBIfam" id="NF002049">
    <property type="entry name" value="PRK00881.1"/>
    <property type="match status" value="1"/>
</dbReference>
<dbReference type="NCBIfam" id="TIGR00355">
    <property type="entry name" value="purH"/>
    <property type="match status" value="1"/>
</dbReference>
<dbReference type="PANTHER" id="PTHR11692:SF0">
    <property type="entry name" value="BIFUNCTIONAL PURINE BIOSYNTHESIS PROTEIN ATIC"/>
    <property type="match status" value="1"/>
</dbReference>
<dbReference type="PANTHER" id="PTHR11692">
    <property type="entry name" value="BIFUNCTIONAL PURINE BIOSYNTHESIS PROTEIN PURH"/>
    <property type="match status" value="1"/>
</dbReference>
<dbReference type="Pfam" id="PF01808">
    <property type="entry name" value="AICARFT_IMPCHas"/>
    <property type="match status" value="1"/>
</dbReference>
<dbReference type="Pfam" id="PF02142">
    <property type="entry name" value="MGS"/>
    <property type="match status" value="1"/>
</dbReference>
<dbReference type="PIRSF" id="PIRSF000414">
    <property type="entry name" value="AICARFT_IMPCHas"/>
    <property type="match status" value="1"/>
</dbReference>
<dbReference type="SMART" id="SM00798">
    <property type="entry name" value="AICARFT_IMPCHas"/>
    <property type="match status" value="1"/>
</dbReference>
<dbReference type="SMART" id="SM00851">
    <property type="entry name" value="MGS"/>
    <property type="match status" value="1"/>
</dbReference>
<dbReference type="SUPFAM" id="SSF53927">
    <property type="entry name" value="Cytidine deaminase-like"/>
    <property type="match status" value="1"/>
</dbReference>
<dbReference type="SUPFAM" id="SSF52335">
    <property type="entry name" value="Methylglyoxal synthase-like"/>
    <property type="match status" value="1"/>
</dbReference>
<dbReference type="PROSITE" id="PS51855">
    <property type="entry name" value="MGS"/>
    <property type="match status" value="1"/>
</dbReference>
<keyword id="KW-0378">Hydrolase</keyword>
<keyword id="KW-0511">Multifunctional enzyme</keyword>
<keyword id="KW-0658">Purine biosynthesis</keyword>
<keyword id="KW-1185">Reference proteome</keyword>
<keyword id="KW-0808">Transferase</keyword>
<proteinExistence type="inferred from homology"/>
<sequence>MQHLRPIRRALLSVSDKAGILEFAKALVERNVELLSTGGTARLLAEAGLPVIEVSDYTGFPEMMDGRVKTLHPKVHGGILGRRGQDDTIMEEHDIRPIDMVVVNLYPFAKTVAHPDCSLADAVENIDIGGPTMVRSAAKNHKDVTIVVNSNDYEKVIEEMDNHQNSLTLDTRFDLAIKAFEHTAAYDSMIANYFGQKVAPYYGDTSQPSGTFPRTLNLNYIKKQDMRYGENAHQQAAFYIEENIEEASIATANQLQGKALSYNNIADTDAALECVKSFSEPACVIVKHANPCGVAIADTLTQAYDNAFKTDPTSAFGGIIAFNRSLDAKTASAVIERQFVEVIIAPSINEDALPILATKPNVRVLACGEWQEAKPALDFKRVNGGLLVQDRDLGMVKEENLRVVTQRQPSEREWKDALFCWKVAKFVKSNAIVYAKNDMTIGIGAGQMSRVYSAKIAGIKAADEGLEVAGCAMASDAFFPFRDGIDAAAMAGVTCVIQPGGSIRDDEVIAAANEHNIAMIFTNMRHFRH</sequence>
<reference key="1">
    <citation type="journal article" date="2008" name="J. Bacteriol.">
        <title>Complete genome sequence of uropathogenic Proteus mirabilis, a master of both adherence and motility.</title>
        <authorList>
            <person name="Pearson M.M."/>
            <person name="Sebaihia M."/>
            <person name="Churcher C."/>
            <person name="Quail M.A."/>
            <person name="Seshasayee A.S."/>
            <person name="Luscombe N.M."/>
            <person name="Abdellah Z."/>
            <person name="Arrosmith C."/>
            <person name="Atkin B."/>
            <person name="Chillingworth T."/>
            <person name="Hauser H."/>
            <person name="Jagels K."/>
            <person name="Moule S."/>
            <person name="Mungall K."/>
            <person name="Norbertczak H."/>
            <person name="Rabbinowitsch E."/>
            <person name="Walker D."/>
            <person name="Whithead S."/>
            <person name="Thomson N.R."/>
            <person name="Rather P.N."/>
            <person name="Parkhill J."/>
            <person name="Mobley H.L.T."/>
        </authorList>
    </citation>
    <scope>NUCLEOTIDE SEQUENCE [LARGE SCALE GENOMIC DNA]</scope>
    <source>
        <strain>HI4320</strain>
    </source>
</reference>
<protein>
    <recommendedName>
        <fullName evidence="1">Bifunctional purine biosynthesis protein PurH</fullName>
    </recommendedName>
    <domain>
        <recommendedName>
            <fullName evidence="1">Phosphoribosylaminoimidazolecarboxamide formyltransferase</fullName>
            <ecNumber evidence="1">2.1.2.3</ecNumber>
        </recommendedName>
        <alternativeName>
            <fullName evidence="1">AICAR transformylase</fullName>
        </alternativeName>
    </domain>
    <domain>
        <recommendedName>
            <fullName evidence="1">IMP cyclohydrolase</fullName>
            <ecNumber evidence="1">3.5.4.10</ecNumber>
        </recommendedName>
        <alternativeName>
            <fullName evidence="1">ATIC</fullName>
        </alternativeName>
        <alternativeName>
            <fullName evidence="1">IMP synthase</fullName>
        </alternativeName>
        <alternativeName>
            <fullName evidence="1">Inosinicase</fullName>
        </alternativeName>
    </domain>
</protein>
<gene>
    <name evidence="1" type="primary">purH</name>
    <name type="ordered locus">PMI2768</name>
</gene>
<accession>B4EYT2</accession>
<organism>
    <name type="scientific">Proteus mirabilis (strain HI4320)</name>
    <dbReference type="NCBI Taxonomy" id="529507"/>
    <lineage>
        <taxon>Bacteria</taxon>
        <taxon>Pseudomonadati</taxon>
        <taxon>Pseudomonadota</taxon>
        <taxon>Gammaproteobacteria</taxon>
        <taxon>Enterobacterales</taxon>
        <taxon>Morganellaceae</taxon>
        <taxon>Proteus</taxon>
    </lineage>
</organism>
<comment type="catalytic activity">
    <reaction evidence="1">
        <text>(6R)-10-formyltetrahydrofolate + 5-amino-1-(5-phospho-beta-D-ribosyl)imidazole-4-carboxamide = 5-formamido-1-(5-phospho-D-ribosyl)imidazole-4-carboxamide + (6S)-5,6,7,8-tetrahydrofolate</text>
        <dbReference type="Rhea" id="RHEA:22192"/>
        <dbReference type="ChEBI" id="CHEBI:57453"/>
        <dbReference type="ChEBI" id="CHEBI:58467"/>
        <dbReference type="ChEBI" id="CHEBI:58475"/>
        <dbReference type="ChEBI" id="CHEBI:195366"/>
        <dbReference type="EC" id="2.1.2.3"/>
    </reaction>
</comment>
<comment type="catalytic activity">
    <reaction evidence="1">
        <text>IMP + H2O = 5-formamido-1-(5-phospho-D-ribosyl)imidazole-4-carboxamide</text>
        <dbReference type="Rhea" id="RHEA:18445"/>
        <dbReference type="ChEBI" id="CHEBI:15377"/>
        <dbReference type="ChEBI" id="CHEBI:58053"/>
        <dbReference type="ChEBI" id="CHEBI:58467"/>
        <dbReference type="EC" id="3.5.4.10"/>
    </reaction>
</comment>
<comment type="pathway">
    <text evidence="1">Purine metabolism; IMP biosynthesis via de novo pathway; 5-formamido-1-(5-phospho-D-ribosyl)imidazole-4-carboxamide from 5-amino-1-(5-phospho-D-ribosyl)imidazole-4-carboxamide (10-formyl THF route): step 1/1.</text>
</comment>
<comment type="pathway">
    <text evidence="1">Purine metabolism; IMP biosynthesis via de novo pathway; IMP from 5-formamido-1-(5-phospho-D-ribosyl)imidazole-4-carboxamide: step 1/1.</text>
</comment>
<comment type="domain">
    <text evidence="1">The IMP cyclohydrolase activity resides in the N-terminal region.</text>
</comment>
<comment type="similarity">
    <text evidence="1">Belongs to the PurH family.</text>
</comment>
<evidence type="ECO:0000255" key="1">
    <source>
        <dbReference type="HAMAP-Rule" id="MF_00139"/>
    </source>
</evidence>
<evidence type="ECO:0000255" key="2">
    <source>
        <dbReference type="PROSITE-ProRule" id="PRU01202"/>
    </source>
</evidence>
<feature type="chain" id="PRO_1000096083" description="Bifunctional purine biosynthesis protein PurH">
    <location>
        <begin position="1"/>
        <end position="529"/>
    </location>
</feature>
<feature type="domain" description="MGS-like" evidence="2">
    <location>
        <begin position="2"/>
        <end position="148"/>
    </location>
</feature>